<sequence length="319" mass="35976">MSEILNLKDLKVYYPIRSGFFNRVTDNVLAVDGVDLTIHEGETVGLVGESGSGKSTIGKTIVGLEQMTSGQLIYKGQDVSKKKIRNQLKYNKDVQMIFQDAFSSLNPRKTIYDIIAEPIRNFEKIDANTENKRIHELLDIVGLPKQALEQYPFQFSGGQQQRIGIARAVATNPKLIVADEPVSALDLSVQAQVLNFMKLIQKDLGIAFLFISHDLGVVRHMTDNIAVMHNGRIVEKGTRRDIFDEPQHIYTKRLLSAIPSIDVTRRAENRKNRLKVEQDFEDKKANFYDKDGHALPLKKLSESHWAALPKGGENVESNY</sequence>
<name>OPPF_LACLS</name>
<feature type="chain" id="PRO_0000092663" description="Oligopeptide transport ATP-binding protein OppF">
    <location>
        <begin position="1"/>
        <end position="319"/>
    </location>
</feature>
<feature type="domain" description="ABC transporter" evidence="3">
    <location>
        <begin position="5"/>
        <end position="255"/>
    </location>
</feature>
<feature type="binding site" evidence="3">
    <location>
        <begin position="48"/>
        <end position="55"/>
    </location>
    <ligand>
        <name>ATP</name>
        <dbReference type="ChEBI" id="CHEBI:30616"/>
    </ligand>
</feature>
<protein>
    <recommendedName>
        <fullName evidence="5">Oligopeptide transport ATP-binding protein OppF</fullName>
        <ecNumber evidence="1">7.4.2.6</ecNumber>
    </recommendedName>
</protein>
<keyword id="KW-0067">ATP-binding</keyword>
<keyword id="KW-1003">Cell membrane</keyword>
<keyword id="KW-0472">Membrane</keyword>
<keyword id="KW-0547">Nucleotide-binding</keyword>
<keyword id="KW-0571">Peptide transport</keyword>
<keyword id="KW-0614">Plasmid</keyword>
<keyword id="KW-0653">Protein transport</keyword>
<keyword id="KW-1278">Translocase</keyword>
<keyword id="KW-0813">Transport</keyword>
<proteinExistence type="inferred from homology"/>
<organism>
    <name type="scientific">Lactococcus lactis subsp. cremoris (strain SK11)</name>
    <dbReference type="NCBI Taxonomy" id="272622"/>
    <lineage>
        <taxon>Bacteria</taxon>
        <taxon>Bacillati</taxon>
        <taxon>Bacillota</taxon>
        <taxon>Bacilli</taxon>
        <taxon>Lactobacillales</taxon>
        <taxon>Streptococcaceae</taxon>
        <taxon>Lactococcus</taxon>
        <taxon>Lactococcus cremoris subsp. cremoris</taxon>
    </lineage>
</organism>
<comment type="function">
    <text evidence="1">Part of the ABC transporter complex OppABCDF involved in the uptake of oligopeptides (By similarity). Probably responsible for energy coupling to the transport system (By similarity).</text>
</comment>
<comment type="catalytic activity">
    <reaction evidence="1">
        <text>a [peptide](out) + ATP + H2O = a [peptide](in) + ADP + phosphate + H(+)</text>
        <dbReference type="Rhea" id="RHEA:78459"/>
        <dbReference type="Rhea" id="RHEA-COMP:19083"/>
        <dbReference type="ChEBI" id="CHEBI:15377"/>
        <dbReference type="ChEBI" id="CHEBI:15378"/>
        <dbReference type="ChEBI" id="CHEBI:30616"/>
        <dbReference type="ChEBI" id="CHEBI:33710"/>
        <dbReference type="ChEBI" id="CHEBI:43474"/>
        <dbReference type="ChEBI" id="CHEBI:456216"/>
        <dbReference type="EC" id="7.4.2.6"/>
    </reaction>
    <physiologicalReaction direction="left-to-right" evidence="1">
        <dbReference type="Rhea" id="RHEA:78460"/>
    </physiologicalReaction>
</comment>
<comment type="subunit">
    <text evidence="1">The complex is composed of two ATP-binding proteins (OppD and OppF), two transmembrane proteins (OppB and OppC) and a solute-binding protein (OppA).</text>
</comment>
<comment type="subcellular location">
    <subcellularLocation>
        <location evidence="2">Cell membrane</location>
        <topology evidence="2">Peripheral membrane protein</topology>
    </subcellularLocation>
</comment>
<comment type="similarity">
    <text evidence="5">Belongs to the ABC transporter superfamily.</text>
</comment>
<reference key="1">
    <citation type="journal article" date="1995" name="Dev. Biol. Stand.">
        <title>Plasmid-mediated oligopeptide transport system in lactococci.</title>
        <authorList>
            <person name="Yu W."/>
            <person name="Gillies K."/>
            <person name="Kondo J.K."/>
            <person name="Broadbent J.R."/>
            <person name="McKay L.L."/>
        </authorList>
    </citation>
    <scope>NUCLEOTIDE SEQUENCE [GENOMIC DNA]</scope>
    <source>
        <plasmid>pSK11L</plasmid>
    </source>
</reference>
<reference key="2">
    <citation type="journal article" date="2006" name="Proc. Natl. Acad. Sci. U.S.A.">
        <title>Comparative genomics of the lactic acid bacteria.</title>
        <authorList>
            <person name="Makarova K.S."/>
            <person name="Slesarev A."/>
            <person name="Wolf Y.I."/>
            <person name="Sorokin A."/>
            <person name="Mirkin B."/>
            <person name="Koonin E.V."/>
            <person name="Pavlov A."/>
            <person name="Pavlova N."/>
            <person name="Karamychev V."/>
            <person name="Polouchine N."/>
            <person name="Shakhova V."/>
            <person name="Grigoriev I."/>
            <person name="Lou Y."/>
            <person name="Rohksar D."/>
            <person name="Lucas S."/>
            <person name="Huang K."/>
            <person name="Goodstein D.M."/>
            <person name="Hawkins T."/>
            <person name="Plengvidhya V."/>
            <person name="Welker D."/>
            <person name="Hughes J."/>
            <person name="Goh Y."/>
            <person name="Benson A."/>
            <person name="Baldwin K."/>
            <person name="Lee J.-H."/>
            <person name="Diaz-Muniz I."/>
            <person name="Dosti B."/>
            <person name="Smeianov V."/>
            <person name="Wechter W."/>
            <person name="Barabote R."/>
            <person name="Lorca G."/>
            <person name="Altermann E."/>
            <person name="Barrangou R."/>
            <person name="Ganesan B."/>
            <person name="Xie Y."/>
            <person name="Rawsthorne H."/>
            <person name="Tamir D."/>
            <person name="Parker C."/>
            <person name="Breidt F."/>
            <person name="Broadbent J.R."/>
            <person name="Hutkins R."/>
            <person name="O'Sullivan D."/>
            <person name="Steele J."/>
            <person name="Unlu G."/>
            <person name="Saier M.H. Jr."/>
            <person name="Klaenhammer T."/>
            <person name="Richardson P."/>
            <person name="Kozyavkin S."/>
            <person name="Weimer B.C."/>
            <person name="Mills D.A."/>
        </authorList>
    </citation>
    <scope>NUCLEOTIDE SEQUENCE [LARGE SCALE GENOMIC DNA]</scope>
    <source>
        <strain>SK11</strain>
        <plasmid>pLACR4</plasmid>
    </source>
</reference>
<gene>
    <name evidence="4" type="primary">oppF</name>
    <name type="ordered locus">LACR_D20</name>
</gene>
<dbReference type="EC" id="7.4.2.6" evidence="1"/>
<dbReference type="EMBL" id="U09553">
    <property type="protein sequence ID" value="AAB00534.1"/>
    <property type="molecule type" value="Unassigned_DNA"/>
</dbReference>
<dbReference type="EMBL" id="CP000429">
    <property type="protein sequence ID" value="ABJ74116.1"/>
    <property type="molecule type" value="Genomic_DNA"/>
</dbReference>
<dbReference type="RefSeq" id="WP_010906164.1">
    <property type="nucleotide sequence ID" value="NC_008506.1"/>
</dbReference>
<dbReference type="SMR" id="P0A2V5"/>
<dbReference type="KEGG" id="llc:LACR_D20"/>
<dbReference type="HOGENOM" id="CLU_000604_1_23_9"/>
<dbReference type="Proteomes" id="UP000000240">
    <property type="component" value="Plasmid pLACR4"/>
</dbReference>
<dbReference type="GO" id="GO:0005886">
    <property type="term" value="C:plasma membrane"/>
    <property type="evidence" value="ECO:0007669"/>
    <property type="project" value="UniProtKB-SubCell"/>
</dbReference>
<dbReference type="GO" id="GO:0005524">
    <property type="term" value="F:ATP binding"/>
    <property type="evidence" value="ECO:0007669"/>
    <property type="project" value="UniProtKB-KW"/>
</dbReference>
<dbReference type="GO" id="GO:0016887">
    <property type="term" value="F:ATP hydrolysis activity"/>
    <property type="evidence" value="ECO:0007669"/>
    <property type="project" value="InterPro"/>
</dbReference>
<dbReference type="GO" id="GO:0015833">
    <property type="term" value="P:peptide transport"/>
    <property type="evidence" value="ECO:0007669"/>
    <property type="project" value="UniProtKB-KW"/>
</dbReference>
<dbReference type="GO" id="GO:0015031">
    <property type="term" value="P:protein transport"/>
    <property type="evidence" value="ECO:0007669"/>
    <property type="project" value="UniProtKB-KW"/>
</dbReference>
<dbReference type="GO" id="GO:0055085">
    <property type="term" value="P:transmembrane transport"/>
    <property type="evidence" value="ECO:0007669"/>
    <property type="project" value="UniProtKB-ARBA"/>
</dbReference>
<dbReference type="CDD" id="cd03257">
    <property type="entry name" value="ABC_NikE_OppD_transporters"/>
    <property type="match status" value="1"/>
</dbReference>
<dbReference type="FunFam" id="3.40.50.300:FF:000016">
    <property type="entry name" value="Oligopeptide ABC transporter ATP-binding component"/>
    <property type="match status" value="1"/>
</dbReference>
<dbReference type="Gene3D" id="3.40.50.300">
    <property type="entry name" value="P-loop containing nucleotide triphosphate hydrolases"/>
    <property type="match status" value="1"/>
</dbReference>
<dbReference type="InterPro" id="IPR003593">
    <property type="entry name" value="AAA+_ATPase"/>
</dbReference>
<dbReference type="InterPro" id="IPR050319">
    <property type="entry name" value="ABC_transp_ATP-bind"/>
</dbReference>
<dbReference type="InterPro" id="IPR003439">
    <property type="entry name" value="ABC_transporter-like_ATP-bd"/>
</dbReference>
<dbReference type="InterPro" id="IPR017871">
    <property type="entry name" value="ABC_transporter-like_CS"/>
</dbReference>
<dbReference type="InterPro" id="IPR013563">
    <property type="entry name" value="Oligopep_ABC_C"/>
</dbReference>
<dbReference type="InterPro" id="IPR027417">
    <property type="entry name" value="P-loop_NTPase"/>
</dbReference>
<dbReference type="PANTHER" id="PTHR43776">
    <property type="entry name" value="TRANSPORT ATP-BINDING PROTEIN"/>
    <property type="match status" value="1"/>
</dbReference>
<dbReference type="Pfam" id="PF00005">
    <property type="entry name" value="ABC_tran"/>
    <property type="match status" value="1"/>
</dbReference>
<dbReference type="Pfam" id="PF08352">
    <property type="entry name" value="oligo_HPY"/>
    <property type="match status" value="1"/>
</dbReference>
<dbReference type="SMART" id="SM00382">
    <property type="entry name" value="AAA"/>
    <property type="match status" value="1"/>
</dbReference>
<dbReference type="SUPFAM" id="SSF52540">
    <property type="entry name" value="P-loop containing nucleoside triphosphate hydrolases"/>
    <property type="match status" value="1"/>
</dbReference>
<dbReference type="PROSITE" id="PS00211">
    <property type="entry name" value="ABC_TRANSPORTER_1"/>
    <property type="match status" value="1"/>
</dbReference>
<dbReference type="PROSITE" id="PS50893">
    <property type="entry name" value="ABC_TRANSPORTER_2"/>
    <property type="match status" value="1"/>
</dbReference>
<geneLocation type="plasmid">
    <name>pSK11L</name>
</geneLocation>
<geneLocation type="plasmid">
    <name>pLACR4</name>
</geneLocation>
<evidence type="ECO:0000250" key="1">
    <source>
        <dbReference type="UniProtKB" id="P0A2V4"/>
    </source>
</evidence>
<evidence type="ECO:0000250" key="2">
    <source>
        <dbReference type="UniProtKB" id="P24137"/>
    </source>
</evidence>
<evidence type="ECO:0000255" key="3">
    <source>
        <dbReference type="PROSITE-ProRule" id="PRU00434"/>
    </source>
</evidence>
<evidence type="ECO:0000303" key="4">
    <source>
    </source>
</evidence>
<evidence type="ECO:0000305" key="5"/>
<accession>P0A2V5</accession>
<accession>P50981</accession>
<accession>Q02VA6</accession>
<accession>Q07734</accession>